<gene>
    <name type="primary">rmuC</name>
    <name type="ordered locus">SF3910</name>
    <name type="ordered locus">S3844</name>
</gene>
<keyword id="KW-0175">Coiled coil</keyword>
<keyword id="KW-0233">DNA recombination</keyword>
<keyword id="KW-1185">Reference proteome</keyword>
<comment type="function">
    <text evidence="1">Involved in DNA recombination.</text>
</comment>
<comment type="similarity">
    <text evidence="4">Belongs to the RmuC family.</text>
</comment>
<comment type="sequence caution" evidence="4">
    <conflict type="erroneous initiation">
        <sequence resource="EMBL-CDS" id="AAN45345"/>
    </conflict>
    <text>Truncated N-terminus.</text>
</comment>
<comment type="sequence caution" evidence="4">
    <conflict type="erroneous initiation">
        <sequence resource="EMBL-CDS" id="AAP18853"/>
    </conflict>
    <text>Truncated N-terminus.</text>
</comment>
<name>RMUC_SHIFL</name>
<accession>P0AG73</accession>
<accession>P27850</accession>
<evidence type="ECO:0000250" key="1"/>
<evidence type="ECO:0000255" key="2"/>
<evidence type="ECO:0000256" key="3">
    <source>
        <dbReference type="SAM" id="MobiDB-lite"/>
    </source>
</evidence>
<evidence type="ECO:0000305" key="4"/>
<sequence length="475" mass="54764">MDFSIMVYAVIALVGVAIGWLFASYQHAQQKAEQLAEREEMVAELSAAKQQITQSEHWRAECELLNNEVRSLQSINTSLEADLREVTTRMEAAQQHADDKIRQMINSEQRLSEQFENLANRIFEHSNRRVDEQNRQSLNSLLSPLREQLDGFRRQVQDSFGKEAQERHTLTHEIRNLQQLNAQMAQEAINLTRALKGDNKTQGNWGEVVLTRVLEASGLREGYEYETQVSIENDARSRMQPDVIVRLPQGKDVVIDAKMTLVAYERYFNAEDDYTRESALQEHIASVRNHIRLLGRKDYQQLPGLRTLDYVLMFIPVEPAFLLALDRQPELITEALKNNIMLVSPTTLLVALRTIANLWRYEHQSRNAQQIADRASKLYDKMRLFIDDMSAIGQSLDKAQDNYRQAMKKLSSGRGNVLAQAEAFRGLGVEIKREINPDLAEQAVSQDEEYRLRSVPEQPNDEAYQRDDEYNQQSR</sequence>
<feature type="chain" id="PRO_0000202040" description="DNA recombination protein RmuC">
    <location>
        <begin position="1"/>
        <end position="475"/>
    </location>
</feature>
<feature type="region of interest" description="Disordered" evidence="3">
    <location>
        <begin position="440"/>
        <end position="475"/>
    </location>
</feature>
<feature type="coiled-coil region" evidence="2">
    <location>
        <begin position="25"/>
        <end position="200"/>
    </location>
</feature>
<reference key="1">
    <citation type="journal article" date="2002" name="Nucleic Acids Res.">
        <title>Genome sequence of Shigella flexneri 2a: insights into pathogenicity through comparison with genomes of Escherichia coli K12 and O157.</title>
        <authorList>
            <person name="Jin Q."/>
            <person name="Yuan Z."/>
            <person name="Xu J."/>
            <person name="Wang Y."/>
            <person name="Shen Y."/>
            <person name="Lu W."/>
            <person name="Wang J."/>
            <person name="Liu H."/>
            <person name="Yang J."/>
            <person name="Yang F."/>
            <person name="Zhang X."/>
            <person name="Zhang J."/>
            <person name="Yang G."/>
            <person name="Wu H."/>
            <person name="Qu D."/>
            <person name="Dong J."/>
            <person name="Sun L."/>
            <person name="Xue Y."/>
            <person name="Zhao A."/>
            <person name="Gao Y."/>
            <person name="Zhu J."/>
            <person name="Kan B."/>
            <person name="Ding K."/>
            <person name="Chen S."/>
            <person name="Cheng H."/>
            <person name="Yao Z."/>
            <person name="He B."/>
            <person name="Chen R."/>
            <person name="Ma D."/>
            <person name="Qiang B."/>
            <person name="Wen Y."/>
            <person name="Hou Y."/>
            <person name="Yu J."/>
        </authorList>
    </citation>
    <scope>NUCLEOTIDE SEQUENCE [LARGE SCALE GENOMIC DNA]</scope>
    <source>
        <strain>301 / Serotype 2a</strain>
    </source>
</reference>
<reference key="2">
    <citation type="journal article" date="2003" name="Infect. Immun.">
        <title>Complete genome sequence and comparative genomics of Shigella flexneri serotype 2a strain 2457T.</title>
        <authorList>
            <person name="Wei J."/>
            <person name="Goldberg M.B."/>
            <person name="Burland V."/>
            <person name="Venkatesan M.M."/>
            <person name="Deng W."/>
            <person name="Fournier G."/>
            <person name="Mayhew G.F."/>
            <person name="Plunkett G. III"/>
            <person name="Rose D.J."/>
            <person name="Darling A."/>
            <person name="Mau B."/>
            <person name="Perna N.T."/>
            <person name="Payne S.M."/>
            <person name="Runyen-Janecky L.J."/>
            <person name="Zhou S."/>
            <person name="Schwartz D.C."/>
            <person name="Blattner F.R."/>
        </authorList>
    </citation>
    <scope>NUCLEOTIDE SEQUENCE [LARGE SCALE GENOMIC DNA]</scope>
    <source>
        <strain>ATCC 700930 / 2457T / Serotype 2a</strain>
    </source>
</reference>
<protein>
    <recommendedName>
        <fullName>DNA recombination protein RmuC</fullName>
    </recommendedName>
</protein>
<organism>
    <name type="scientific">Shigella flexneri</name>
    <dbReference type="NCBI Taxonomy" id="623"/>
    <lineage>
        <taxon>Bacteria</taxon>
        <taxon>Pseudomonadati</taxon>
        <taxon>Pseudomonadota</taxon>
        <taxon>Gammaproteobacteria</taxon>
        <taxon>Enterobacterales</taxon>
        <taxon>Enterobacteriaceae</taxon>
        <taxon>Shigella</taxon>
    </lineage>
</organism>
<dbReference type="EMBL" id="AE005674">
    <property type="protein sequence ID" value="AAN45345.2"/>
    <property type="status" value="ALT_INIT"/>
    <property type="molecule type" value="Genomic_DNA"/>
</dbReference>
<dbReference type="EMBL" id="AE014073">
    <property type="protein sequence ID" value="AAP18853.1"/>
    <property type="status" value="ALT_INIT"/>
    <property type="molecule type" value="Genomic_DNA"/>
</dbReference>
<dbReference type="RefSeq" id="WP_000347714.1">
    <property type="nucleotide sequence ID" value="NZ_WPGW01000036.1"/>
</dbReference>
<dbReference type="SMR" id="P0AG73"/>
<dbReference type="STRING" id="198214.SF3910"/>
<dbReference type="PaxDb" id="198214-SF3910"/>
<dbReference type="GeneID" id="75204826"/>
<dbReference type="KEGG" id="sfl:SF3910"/>
<dbReference type="KEGG" id="sfx:S3844"/>
<dbReference type="PATRIC" id="fig|198214.7.peg.4610"/>
<dbReference type="HOGENOM" id="CLU_024057_0_1_6"/>
<dbReference type="Proteomes" id="UP000001006">
    <property type="component" value="Chromosome"/>
</dbReference>
<dbReference type="Proteomes" id="UP000002673">
    <property type="component" value="Chromosome"/>
</dbReference>
<dbReference type="GO" id="GO:0006310">
    <property type="term" value="P:DNA recombination"/>
    <property type="evidence" value="ECO:0007669"/>
    <property type="project" value="UniProtKB-KW"/>
</dbReference>
<dbReference type="InterPro" id="IPR003798">
    <property type="entry name" value="DNA_recombination_RmuC"/>
</dbReference>
<dbReference type="NCBIfam" id="NF007686">
    <property type="entry name" value="PRK10361.1"/>
    <property type="match status" value="1"/>
</dbReference>
<dbReference type="PANTHER" id="PTHR30563">
    <property type="entry name" value="DNA RECOMBINATION PROTEIN RMUC"/>
    <property type="match status" value="1"/>
</dbReference>
<dbReference type="PANTHER" id="PTHR30563:SF0">
    <property type="entry name" value="DNA RECOMBINATION PROTEIN RMUC"/>
    <property type="match status" value="1"/>
</dbReference>
<dbReference type="Pfam" id="PF02646">
    <property type="entry name" value="RmuC"/>
    <property type="match status" value="1"/>
</dbReference>
<proteinExistence type="inferred from homology"/>